<organism>
    <name type="scientific">Rattus norvegicus</name>
    <name type="common">Rat</name>
    <dbReference type="NCBI Taxonomy" id="10116"/>
    <lineage>
        <taxon>Eukaryota</taxon>
        <taxon>Metazoa</taxon>
        <taxon>Chordata</taxon>
        <taxon>Craniata</taxon>
        <taxon>Vertebrata</taxon>
        <taxon>Euteleostomi</taxon>
        <taxon>Mammalia</taxon>
        <taxon>Eutheria</taxon>
        <taxon>Euarchontoglires</taxon>
        <taxon>Glires</taxon>
        <taxon>Rodentia</taxon>
        <taxon>Myomorpha</taxon>
        <taxon>Muroidea</taxon>
        <taxon>Muridae</taxon>
        <taxon>Murinae</taxon>
        <taxon>Rattus</taxon>
    </lineage>
</organism>
<keyword id="KW-0963">Cytoplasm</keyword>
<keyword id="KW-0903">Direct protein sequencing</keyword>
<keyword id="KW-1015">Disulfide bond</keyword>
<keyword id="KW-0349">Heme</keyword>
<keyword id="KW-0408">Iron</keyword>
<keyword id="KW-0479">Metal-binding</keyword>
<keyword id="KW-0539">Nucleus</keyword>
<keyword id="KW-0560">Oxidoreductase</keyword>
<keyword id="KW-1185">Reference proteome</keyword>
<dbReference type="EC" id="1.14.12.-" evidence="1"/>
<dbReference type="EC" id="1.7.-.-" evidence="1"/>
<dbReference type="EC" id="1.11.1.-" evidence="1"/>
<dbReference type="EC" id="1.15.1.1" evidence="1"/>
<dbReference type="EMBL" id="AJ245663">
    <property type="protein sequence ID" value="CAC59827.1"/>
    <property type="molecule type" value="mRNA"/>
</dbReference>
<dbReference type="EMBL" id="BC088455">
    <property type="protein sequence ID" value="AAH88455.1"/>
    <property type="molecule type" value="mRNA"/>
</dbReference>
<dbReference type="RefSeq" id="NP_570100.1">
    <property type="nucleotide sequence ID" value="NM_130744.2"/>
</dbReference>
<dbReference type="SMR" id="Q921A4"/>
<dbReference type="FunCoup" id="Q921A4">
    <property type="interactions" value="114"/>
</dbReference>
<dbReference type="STRING" id="10116.ENSRNOP00000016067"/>
<dbReference type="GlyGen" id="Q921A4">
    <property type="glycosylation" value="1 site"/>
</dbReference>
<dbReference type="PhosphoSitePlus" id="Q921A4"/>
<dbReference type="SwissPalm" id="Q921A4"/>
<dbReference type="jPOST" id="Q921A4"/>
<dbReference type="PaxDb" id="10116-ENSRNOP00000016067"/>
<dbReference type="Ensembl" id="ENSRNOT00000016067.5">
    <property type="protein sequence ID" value="ENSRNOP00000016067.4"/>
    <property type="gene ID" value="ENSRNOG00000011541.5"/>
</dbReference>
<dbReference type="GeneID" id="170520"/>
<dbReference type="KEGG" id="rno:170520"/>
<dbReference type="AGR" id="RGD:69415"/>
<dbReference type="CTD" id="114757"/>
<dbReference type="RGD" id="69415">
    <property type="gene designation" value="Cygb"/>
</dbReference>
<dbReference type="eggNOG" id="KOG3378">
    <property type="taxonomic scope" value="Eukaryota"/>
</dbReference>
<dbReference type="GeneTree" id="ENSGT00940000155004"/>
<dbReference type="HOGENOM" id="CLU_003827_10_1_1"/>
<dbReference type="InParanoid" id="Q921A4"/>
<dbReference type="OMA" id="TWARVYE"/>
<dbReference type="OrthoDB" id="436496at2759"/>
<dbReference type="PhylomeDB" id="Q921A4"/>
<dbReference type="TreeFam" id="TF332967"/>
<dbReference type="Reactome" id="R-RNO-203615">
    <property type="pathway name" value="eNOS activation"/>
</dbReference>
<dbReference type="Reactome" id="R-RNO-8981607">
    <property type="pathway name" value="Intracellular oxygen transport"/>
</dbReference>
<dbReference type="PRO" id="PR:Q921A4"/>
<dbReference type="Proteomes" id="UP000002494">
    <property type="component" value="Chromosome 10"/>
</dbReference>
<dbReference type="Bgee" id="ENSRNOG00000011541">
    <property type="expression patterns" value="Expressed in heart and 19 other cell types or tissues"/>
</dbReference>
<dbReference type="ExpressionAtlas" id="Q921A4">
    <property type="expression patterns" value="baseline and differential"/>
</dbReference>
<dbReference type="GO" id="GO:0005737">
    <property type="term" value="C:cytoplasm"/>
    <property type="evidence" value="ECO:0000314"/>
    <property type="project" value="UniProtKB"/>
</dbReference>
<dbReference type="GO" id="GO:0005829">
    <property type="term" value="C:cytosol"/>
    <property type="evidence" value="ECO:0007669"/>
    <property type="project" value="Ensembl"/>
</dbReference>
<dbReference type="GO" id="GO:0043005">
    <property type="term" value="C:neuron projection"/>
    <property type="evidence" value="ECO:0000266"/>
    <property type="project" value="RGD"/>
</dbReference>
<dbReference type="GO" id="GO:0043025">
    <property type="term" value="C:neuronal cell body"/>
    <property type="evidence" value="ECO:0000266"/>
    <property type="project" value="RGD"/>
</dbReference>
<dbReference type="GO" id="GO:0016607">
    <property type="term" value="C:nuclear speck"/>
    <property type="evidence" value="ECO:0007669"/>
    <property type="project" value="Ensembl"/>
</dbReference>
<dbReference type="GO" id="GO:0005634">
    <property type="term" value="C:nucleus"/>
    <property type="evidence" value="ECO:0000250"/>
    <property type="project" value="UniProtKB"/>
</dbReference>
<dbReference type="GO" id="GO:0070025">
    <property type="term" value="F:carbon monoxide binding"/>
    <property type="evidence" value="ECO:0000266"/>
    <property type="project" value="RGD"/>
</dbReference>
<dbReference type="GO" id="GO:0004096">
    <property type="term" value="F:catalase activity"/>
    <property type="evidence" value="ECO:0000314"/>
    <property type="project" value="RGD"/>
</dbReference>
<dbReference type="GO" id="GO:0047888">
    <property type="term" value="F:fatty acid peroxidase activity"/>
    <property type="evidence" value="ECO:0000314"/>
    <property type="project" value="RGD"/>
</dbReference>
<dbReference type="GO" id="GO:0020037">
    <property type="term" value="F:heme binding"/>
    <property type="evidence" value="ECO:0000314"/>
    <property type="project" value="RGD"/>
</dbReference>
<dbReference type="GO" id="GO:0005506">
    <property type="term" value="F:iron ion binding"/>
    <property type="evidence" value="ECO:0007669"/>
    <property type="project" value="InterPro"/>
</dbReference>
<dbReference type="GO" id="GO:0141118">
    <property type="term" value="F:nitric oxide dioxygenase activity, heme protein as donor"/>
    <property type="evidence" value="ECO:0000314"/>
    <property type="project" value="UniProtKB"/>
</dbReference>
<dbReference type="GO" id="GO:0098809">
    <property type="term" value="F:nitrite reductase activity"/>
    <property type="evidence" value="ECO:0000250"/>
    <property type="project" value="UniProtKB"/>
</dbReference>
<dbReference type="GO" id="GO:0016491">
    <property type="term" value="F:oxidoreductase activity"/>
    <property type="evidence" value="ECO:0000318"/>
    <property type="project" value="GO_Central"/>
</dbReference>
<dbReference type="GO" id="GO:0016675">
    <property type="term" value="F:oxidoreductase activity, acting on a heme group of donors"/>
    <property type="evidence" value="ECO:0000266"/>
    <property type="project" value="RGD"/>
</dbReference>
<dbReference type="GO" id="GO:0019825">
    <property type="term" value="F:oxygen binding"/>
    <property type="evidence" value="ECO:0000266"/>
    <property type="project" value="RGD"/>
</dbReference>
<dbReference type="GO" id="GO:0004601">
    <property type="term" value="F:peroxidase activity"/>
    <property type="evidence" value="ECO:0000314"/>
    <property type="project" value="UniProtKB"/>
</dbReference>
<dbReference type="GO" id="GO:0004784">
    <property type="term" value="F:superoxide dismutase activity"/>
    <property type="evidence" value="ECO:0000250"/>
    <property type="project" value="UniProtKB"/>
</dbReference>
<dbReference type="GO" id="GO:0019395">
    <property type="term" value="P:fatty acid oxidation"/>
    <property type="evidence" value="ECO:0000314"/>
    <property type="project" value="RGD"/>
</dbReference>
<dbReference type="GO" id="GO:0032966">
    <property type="term" value="P:negative regulation of collagen biosynthetic process"/>
    <property type="evidence" value="ECO:0000314"/>
    <property type="project" value="RGD"/>
</dbReference>
<dbReference type="GO" id="GO:0010764">
    <property type="term" value="P:negative regulation of fibroblast migration"/>
    <property type="evidence" value="ECO:0000314"/>
    <property type="project" value="RGD"/>
</dbReference>
<dbReference type="GO" id="GO:2000490">
    <property type="term" value="P:negative regulation of hepatic stellate cell activation"/>
    <property type="evidence" value="ECO:0000314"/>
    <property type="project" value="RGD"/>
</dbReference>
<dbReference type="GO" id="GO:0046210">
    <property type="term" value="P:nitric oxide catabolic process"/>
    <property type="evidence" value="ECO:0000315"/>
    <property type="project" value="UniProtKB"/>
</dbReference>
<dbReference type="GO" id="GO:0015671">
    <property type="term" value="P:oxygen transport"/>
    <property type="evidence" value="ECO:0007669"/>
    <property type="project" value="InterPro"/>
</dbReference>
<dbReference type="GO" id="GO:0019430">
    <property type="term" value="P:removal of superoxide radicals"/>
    <property type="evidence" value="ECO:0000250"/>
    <property type="project" value="UniProtKB"/>
</dbReference>
<dbReference type="GO" id="GO:0001666">
    <property type="term" value="P:response to hypoxia"/>
    <property type="evidence" value="ECO:0000270"/>
    <property type="project" value="RGD"/>
</dbReference>
<dbReference type="GO" id="GO:0006979">
    <property type="term" value="P:response to oxidative stress"/>
    <property type="evidence" value="ECO:0000314"/>
    <property type="project" value="UniProtKB"/>
</dbReference>
<dbReference type="CDD" id="cd08924">
    <property type="entry name" value="Cygb"/>
    <property type="match status" value="1"/>
</dbReference>
<dbReference type="FunFam" id="1.10.490.10:FF:000005">
    <property type="entry name" value="Cytoglobin"/>
    <property type="match status" value="1"/>
</dbReference>
<dbReference type="Gene3D" id="1.10.490.10">
    <property type="entry name" value="Globins"/>
    <property type="match status" value="1"/>
</dbReference>
<dbReference type="InterPro" id="IPR000971">
    <property type="entry name" value="Globin"/>
</dbReference>
<dbReference type="InterPro" id="IPR009050">
    <property type="entry name" value="Globin-like_sf"/>
</dbReference>
<dbReference type="InterPro" id="IPR012292">
    <property type="entry name" value="Globin/Proto"/>
</dbReference>
<dbReference type="InterPro" id="IPR013314">
    <property type="entry name" value="Globin_lamprey/hagfish"/>
</dbReference>
<dbReference type="PANTHER" id="PTHR46783">
    <property type="entry name" value="CYTOGLOBIN"/>
    <property type="match status" value="1"/>
</dbReference>
<dbReference type="PANTHER" id="PTHR46783:SF2">
    <property type="entry name" value="CYTOGLOBIN"/>
    <property type="match status" value="1"/>
</dbReference>
<dbReference type="Pfam" id="PF00042">
    <property type="entry name" value="Globin"/>
    <property type="match status" value="1"/>
</dbReference>
<dbReference type="PRINTS" id="PR01906">
    <property type="entry name" value="FISHGLOBIN"/>
</dbReference>
<dbReference type="SUPFAM" id="SSF46458">
    <property type="entry name" value="Globin-like"/>
    <property type="match status" value="1"/>
</dbReference>
<dbReference type="PROSITE" id="PS01033">
    <property type="entry name" value="GLOBIN"/>
    <property type="match status" value="1"/>
</dbReference>
<reference key="1">
    <citation type="journal article" date="2001" name="J. Biol. Chem.">
        <title>Characterization of a stellate cell activation-associated protein (STAP) with peroxidase activity found in rat hepatic stellate cells.</title>
        <authorList>
            <person name="Kawada N."/>
            <person name="Kristensen D.B."/>
            <person name="Asahina K."/>
            <person name="Nakatani K."/>
            <person name="Minamiyama Y."/>
            <person name="Seki S."/>
            <person name="Yoshizato K."/>
        </authorList>
    </citation>
    <scope>NUCLEOTIDE SEQUENCE [MRNA]</scope>
    <scope>PROTEIN SEQUENCE OF 5-12 AND 36-44</scope>
    <scope>TISSUE SPECIFICITY</scope>
    <source>
        <tissue>Liver</tissue>
    </source>
</reference>
<reference key="2">
    <citation type="journal article" date="2004" name="Genome Res.">
        <title>The status, quality, and expansion of the NIH full-length cDNA project: the Mammalian Gene Collection (MGC).</title>
        <authorList>
            <consortium name="The MGC Project Team"/>
        </authorList>
    </citation>
    <scope>NUCLEOTIDE SEQUENCE [LARGE SCALE MRNA]</scope>
    <source>
        <tissue>Kidney</tissue>
    </source>
</reference>
<reference key="3">
    <citation type="journal article" date="2004" name="Lab. Invest.">
        <title>Cytoglobin/STAP, its unique localization in splanchnic fibroblast-like cells and function in organ fibrogenesis.</title>
        <authorList>
            <person name="Nakatani K."/>
            <person name="Okuyama H."/>
            <person name="Shimahara Y."/>
            <person name="Saeki S."/>
            <person name="Kim D.H."/>
            <person name="Nakajima Y."/>
            <person name="Seki S."/>
            <person name="Kawada N."/>
            <person name="Yoshizato K."/>
        </authorList>
    </citation>
    <scope>SUBCELLULAR LOCATION</scope>
    <scope>TISSUE SPECIFICITY</scope>
</reference>
<reference key="4">
    <citation type="journal article" date="2004" name="J. Biol. Chem.">
        <title>Cytoglobin is a respiratory protein in connective tissue and neurons, which is up-regulated by hypoxia.</title>
        <authorList>
            <person name="Schmidt M."/>
            <person name="Gerlach F."/>
            <person name="Avivi A."/>
            <person name="Laufs T."/>
            <person name="Wystub S."/>
            <person name="Simpson J.C."/>
            <person name="Nevo E."/>
            <person name="Saaler-Reinhardt S."/>
            <person name="Reuss S."/>
            <person name="Hankeln T."/>
            <person name="Burmester T."/>
        </authorList>
    </citation>
    <scope>INDUCTION BY HYPOXIA</scope>
</reference>
<reference key="5">
    <citation type="journal article" date="2017" name="Nat. Commun.">
        <title>Cytoglobin regulates blood pressure and vascular tone through nitric oxide metabolism in the vascular wall.</title>
        <authorList>
            <person name="Liu X."/>
            <person name="El-Mahdy M.A."/>
            <person name="Boslett J."/>
            <person name="Varadharaj S."/>
            <person name="Hemann C."/>
            <person name="Abdelghany T.M."/>
            <person name="Ismail R.S."/>
            <person name="Little S.C."/>
            <person name="Zhou D."/>
            <person name="Thuy L.T."/>
            <person name="Kawada N."/>
            <person name="Zweier J.L."/>
        </authorList>
    </citation>
    <scope>FUNCTION</scope>
    <scope>CATALYTIC ACTIVITY</scope>
</reference>
<sequence>MEKVPGDMEIERRERNEELSEAERKAVQATWARLYANCEDVGVAILVRFFVNFPSAKQYFSQFKHMEDPLEMERSPQLRKHACRVMGALNTVVENLHDPDKVSSVLALVGKAHALKHKVEPMYFKILSGVILDVIAEEFANDFPVETQKAWTKLRGLIYSHVTAAYKEVGWVQQVPNTTTLPATLPSSGP</sequence>
<comment type="function">
    <text evidence="1 7">Probable multifunctional globin with a hexacoordinated heme iron required for the catalysis of various reactions depending on redox condition of the cell as well as oxygen availability (PubMed:28393874). Has a nitric oxide dioxygenase (NOD) activity and is most probably involved in cell-mediated and oxygen-dependent nitric oxide consumption (PubMed:28393874). By scavenging this second messenger may regulate several biological processes including endothelium-mediated vasodilation and vascular tone (PubMed:28393874). Under normoxic conditions functions as a nitric oxide dioxygenase (NOD) but under hypoxic conditions the globin may switch its function to that of a nitrite (NO2) reductase (NiR), generating nitric oxide. Could also have peroxidase and superoxide dismutase activities, detoxifying reactive oxygen species and protecting cells against oxidative stress. Also binds dioxygen with low affinity and could function as an oxygen sensor but has probably no function as a respiratory oxygen carrier (By similarity).</text>
</comment>
<comment type="catalytic activity">
    <reaction evidence="7">
        <text>Fe(II)-heme b-[protein] + nitric oxide + O2 = Fe(III)-heme b-[protein] + nitrate</text>
        <dbReference type="Rhea" id="RHEA:78091"/>
        <dbReference type="Rhea" id="RHEA-COMP:18975"/>
        <dbReference type="Rhea" id="RHEA-COMP:18976"/>
        <dbReference type="ChEBI" id="CHEBI:15379"/>
        <dbReference type="ChEBI" id="CHEBI:16480"/>
        <dbReference type="ChEBI" id="CHEBI:17632"/>
        <dbReference type="ChEBI" id="CHEBI:55376"/>
        <dbReference type="ChEBI" id="CHEBI:60344"/>
    </reaction>
    <physiologicalReaction direction="left-to-right" evidence="7">
        <dbReference type="Rhea" id="RHEA:78092"/>
    </physiologicalReaction>
</comment>
<comment type="catalytic activity">
    <reaction evidence="1">
        <text>Fe(III)-heme b-[protein] + nitric oxide + H2O = Fe(II)-heme b-[protein] + nitrite + 2 H(+)</text>
        <dbReference type="Rhea" id="RHEA:77711"/>
        <dbReference type="Rhea" id="RHEA-COMP:18975"/>
        <dbReference type="Rhea" id="RHEA-COMP:18976"/>
        <dbReference type="ChEBI" id="CHEBI:15377"/>
        <dbReference type="ChEBI" id="CHEBI:15378"/>
        <dbReference type="ChEBI" id="CHEBI:16301"/>
        <dbReference type="ChEBI" id="CHEBI:16480"/>
        <dbReference type="ChEBI" id="CHEBI:55376"/>
        <dbReference type="ChEBI" id="CHEBI:60344"/>
    </reaction>
    <physiologicalReaction direction="right-to-left" evidence="1">
        <dbReference type="Rhea" id="RHEA:77713"/>
    </physiologicalReaction>
</comment>
<comment type="catalytic activity">
    <reaction evidence="1">
        <text>2 superoxide + 2 H(+) = H2O2 + O2</text>
        <dbReference type="Rhea" id="RHEA:20696"/>
        <dbReference type="ChEBI" id="CHEBI:15378"/>
        <dbReference type="ChEBI" id="CHEBI:15379"/>
        <dbReference type="ChEBI" id="CHEBI:16240"/>
        <dbReference type="ChEBI" id="CHEBI:18421"/>
        <dbReference type="EC" id="1.15.1.1"/>
    </reaction>
    <physiologicalReaction direction="left-to-right" evidence="1">
        <dbReference type="Rhea" id="RHEA:20697"/>
    </physiologicalReaction>
</comment>
<comment type="catalytic activity">
    <reaction evidence="1">
        <text>H2O2 + AH2 = A + 2 H2O</text>
        <dbReference type="Rhea" id="RHEA:30275"/>
        <dbReference type="ChEBI" id="CHEBI:13193"/>
        <dbReference type="ChEBI" id="CHEBI:15377"/>
        <dbReference type="ChEBI" id="CHEBI:16240"/>
        <dbReference type="ChEBI" id="CHEBI:17499"/>
    </reaction>
    <physiologicalReaction direction="left-to-right" evidence="1">
        <dbReference type="Rhea" id="RHEA:30276"/>
    </physiologicalReaction>
</comment>
<comment type="activity regulation">
    <text evidence="1">The nitric oxide dioxygenase activity is activated by a reducing system composed of cytochrome b5, its upstream reductase CYB5R3 and NADH.</text>
</comment>
<comment type="subunit">
    <text evidence="1">Monomeric. Homodimer; disulfide-linked in vitro. Also homooligomeric in vitro.</text>
</comment>
<comment type="subcellular location">
    <subcellularLocation>
        <location evidence="5">Cytoplasm</location>
    </subcellularLocation>
    <subcellularLocation>
        <location evidence="1">Nucleus</location>
    </subcellularLocation>
</comment>
<comment type="tissue specificity">
    <text evidence="4 5">Widely expressed (at protein level).</text>
</comment>
<comment type="induction">
    <text evidence="6">Up-regulated upon hypoxia.</text>
</comment>
<comment type="PTM">
    <text evidence="1">The formation of an intramolecular disulfide bond between cysteines Cys-38 and Cys-83 specifically enhances the nitrite reductase activity.</text>
</comment>
<comment type="similarity">
    <text evidence="2">Belongs to the globin family.</text>
</comment>
<proteinExistence type="evidence at protein level"/>
<name>CYGB_RAT</name>
<accession>Q921A4</accession>
<protein>
    <recommendedName>
        <fullName evidence="9">Cytoglobin</fullName>
    </recommendedName>
    <alternativeName>
        <fullName>Nitric oxygen dioxygenase CYGB</fullName>
        <ecNumber evidence="1">1.14.12.-</ecNumber>
    </alternativeName>
    <alternativeName>
        <fullName>Nitrite reductase CYGB</fullName>
        <ecNumber evidence="1">1.7.-.-</ecNumber>
    </alternativeName>
    <alternativeName>
        <fullName>Pseudoperoxidase CYGB</fullName>
        <ecNumber evidence="1">1.11.1.-</ecNumber>
    </alternativeName>
    <alternativeName>
        <fullName evidence="8">Stellate cell activation-associated protein</fullName>
    </alternativeName>
    <alternativeName>
        <fullName>Superoxide dismutase CYGB</fullName>
        <ecNumber evidence="1">1.15.1.1</ecNumber>
    </alternativeName>
</protein>
<evidence type="ECO:0000250" key="1">
    <source>
        <dbReference type="UniProtKB" id="Q8WWM9"/>
    </source>
</evidence>
<evidence type="ECO:0000255" key="2">
    <source>
        <dbReference type="PROSITE-ProRule" id="PRU00238"/>
    </source>
</evidence>
<evidence type="ECO:0000256" key="3">
    <source>
        <dbReference type="SAM" id="MobiDB-lite"/>
    </source>
</evidence>
<evidence type="ECO:0000269" key="4">
    <source>
    </source>
</evidence>
<evidence type="ECO:0000269" key="5">
    <source>
    </source>
</evidence>
<evidence type="ECO:0000269" key="6">
    <source>
    </source>
</evidence>
<evidence type="ECO:0000269" key="7">
    <source>
    </source>
</evidence>
<evidence type="ECO:0000303" key="8">
    <source>
    </source>
</evidence>
<evidence type="ECO:0000303" key="9">
    <source>
    </source>
</evidence>
<evidence type="ECO:0000303" key="10">
    <source>
    </source>
</evidence>
<evidence type="ECO:0000312" key="11">
    <source>
        <dbReference type="RGD" id="69415"/>
    </source>
</evidence>
<feature type="chain" id="PRO_0000053386" description="Cytoglobin">
    <location>
        <begin position="1"/>
        <end position="190"/>
    </location>
</feature>
<feature type="domain" description="Globin" evidence="2">
    <location>
        <begin position="18"/>
        <end position="167"/>
    </location>
</feature>
<feature type="region of interest" description="Disordered" evidence="3">
    <location>
        <begin position="1"/>
        <end position="21"/>
    </location>
</feature>
<feature type="binding site" description="distal binding residue" evidence="1 2">
    <location>
        <position position="81"/>
    </location>
    <ligand>
        <name>heme b</name>
        <dbReference type="ChEBI" id="CHEBI:60344"/>
    </ligand>
    <ligandPart>
        <name>Fe</name>
        <dbReference type="ChEBI" id="CHEBI:18248"/>
    </ligandPart>
</feature>
<feature type="binding site" description="proximal binding residue" evidence="1 2">
    <location>
        <position position="113"/>
    </location>
    <ligand>
        <name>heme b</name>
        <dbReference type="ChEBI" id="CHEBI:60344"/>
    </ligand>
    <ligandPart>
        <name>Fe</name>
        <dbReference type="ChEBI" id="CHEBI:18248"/>
    </ligandPart>
</feature>
<feature type="disulfide bond" description="Redox-active; in monomeric form" evidence="1">
    <location>
        <begin position="38"/>
        <end position="83"/>
    </location>
</feature>
<feature type="disulfide bond" description="Interchain (with C-83); in dimeric form" evidence="1">
    <location>
        <position position="38"/>
    </location>
</feature>
<feature type="disulfide bond" description="Interchain (with C-38); in dimeric form" evidence="1">
    <location>
        <position position="83"/>
    </location>
</feature>
<gene>
    <name evidence="11" type="primary">Cygb</name>
    <name evidence="10" type="synonym">Stap</name>
</gene>